<keyword id="KW-0131">Cell cycle</keyword>
<keyword id="KW-0132">Cell division</keyword>
<keyword id="KW-0342">GTP-binding</keyword>
<keyword id="KW-0460">Magnesium</keyword>
<keyword id="KW-0479">Metal-binding</keyword>
<keyword id="KW-0547">Nucleotide-binding</keyword>
<keyword id="KW-1185">Reference proteome</keyword>
<keyword id="KW-0717">Septation</keyword>
<reference key="1">
    <citation type="journal article" date="2009" name="Appl. Environ. Microbiol.">
        <title>Three genomes from the phylum Acidobacteria provide insight into the lifestyles of these microorganisms in soils.</title>
        <authorList>
            <person name="Ward N.L."/>
            <person name="Challacombe J.F."/>
            <person name="Janssen P.H."/>
            <person name="Henrissat B."/>
            <person name="Coutinho P.M."/>
            <person name="Wu M."/>
            <person name="Xie G."/>
            <person name="Haft D.H."/>
            <person name="Sait M."/>
            <person name="Badger J."/>
            <person name="Barabote R.D."/>
            <person name="Bradley B."/>
            <person name="Brettin T.S."/>
            <person name="Brinkac L.M."/>
            <person name="Bruce D."/>
            <person name="Creasy T."/>
            <person name="Daugherty S.C."/>
            <person name="Davidsen T.M."/>
            <person name="DeBoy R.T."/>
            <person name="Detter J.C."/>
            <person name="Dodson R.J."/>
            <person name="Durkin A.S."/>
            <person name="Ganapathy A."/>
            <person name="Gwinn-Giglio M."/>
            <person name="Han C.S."/>
            <person name="Khouri H."/>
            <person name="Kiss H."/>
            <person name="Kothari S.P."/>
            <person name="Madupu R."/>
            <person name="Nelson K.E."/>
            <person name="Nelson W.C."/>
            <person name="Paulsen I."/>
            <person name="Penn K."/>
            <person name="Ren Q."/>
            <person name="Rosovitz M.J."/>
            <person name="Selengut J.D."/>
            <person name="Shrivastava S."/>
            <person name="Sullivan S.A."/>
            <person name="Tapia R."/>
            <person name="Thompson L.S."/>
            <person name="Watkins K.L."/>
            <person name="Yang Q."/>
            <person name="Yu C."/>
            <person name="Zafar N."/>
            <person name="Zhou L."/>
            <person name="Kuske C.R."/>
        </authorList>
    </citation>
    <scope>NUCLEOTIDE SEQUENCE [LARGE SCALE GENOMIC DNA]</scope>
    <source>
        <strain>ATCC 51196 / DSM 11244 / BCRC 80197 / JCM 7670 / NBRC 15755 / NCIMB 13165 / 161</strain>
    </source>
</reference>
<comment type="function">
    <text evidence="1">Necessary for normal cell division and for the maintenance of normal septation.</text>
</comment>
<comment type="cofactor">
    <cofactor evidence="1">
        <name>Mg(2+)</name>
        <dbReference type="ChEBI" id="CHEBI:18420"/>
    </cofactor>
</comment>
<comment type="similarity">
    <text evidence="1">Belongs to the TRAFAC class TrmE-Era-EngA-EngB-Septin-like GTPase superfamily. EngB GTPase family.</text>
</comment>
<proteinExistence type="inferred from homology"/>
<name>ENGB_ACIC5</name>
<feature type="chain" id="PRO_1000133038" description="Probable GTP-binding protein EngB">
    <location>
        <begin position="1"/>
        <end position="211"/>
    </location>
</feature>
<feature type="domain" description="EngB-type G" evidence="1">
    <location>
        <begin position="21"/>
        <end position="197"/>
    </location>
</feature>
<feature type="binding site" evidence="1">
    <location>
        <begin position="29"/>
        <end position="36"/>
    </location>
    <ligand>
        <name>GTP</name>
        <dbReference type="ChEBI" id="CHEBI:37565"/>
    </ligand>
</feature>
<feature type="binding site" evidence="1">
    <location>
        <position position="36"/>
    </location>
    <ligand>
        <name>Mg(2+)</name>
        <dbReference type="ChEBI" id="CHEBI:18420"/>
    </ligand>
</feature>
<feature type="binding site" evidence="1">
    <location>
        <begin position="55"/>
        <end position="59"/>
    </location>
    <ligand>
        <name>GTP</name>
        <dbReference type="ChEBI" id="CHEBI:37565"/>
    </ligand>
</feature>
<feature type="binding site" evidence="1">
    <location>
        <position position="57"/>
    </location>
    <ligand>
        <name>Mg(2+)</name>
        <dbReference type="ChEBI" id="CHEBI:18420"/>
    </ligand>
</feature>
<feature type="binding site" evidence="1">
    <location>
        <begin position="80"/>
        <end position="83"/>
    </location>
    <ligand>
        <name>GTP</name>
        <dbReference type="ChEBI" id="CHEBI:37565"/>
    </ligand>
</feature>
<feature type="binding site" evidence="1">
    <location>
        <begin position="147"/>
        <end position="150"/>
    </location>
    <ligand>
        <name>GTP</name>
        <dbReference type="ChEBI" id="CHEBI:37565"/>
    </ligand>
</feature>
<feature type="binding site" evidence="1">
    <location>
        <begin position="176"/>
        <end position="178"/>
    </location>
    <ligand>
        <name>GTP</name>
        <dbReference type="ChEBI" id="CHEBI:37565"/>
    </ligand>
</feature>
<sequence length="211" mass="23117">MQVYPKFMRSAMATEHFPPVTAPEFAFLGRSNVGKSSLINALLGSKQAKVSSTPGRTRAINFFSLTTSPERQQPNFLFADLPGYGYAKISKSISAEWPKFIEPYLAERPSLALCLCLVDSNIPPQPSDAQLTEFLRSIGRPYLVVATKADRLSGNGRTKAKQTLSRALEAENLLLCSAKTGLGMKELWGEIHRVAAEATEAMKQNQRPPSA</sequence>
<accession>C1F4C3</accession>
<protein>
    <recommendedName>
        <fullName evidence="1">Probable GTP-binding protein EngB</fullName>
    </recommendedName>
</protein>
<dbReference type="EMBL" id="CP001472">
    <property type="protein sequence ID" value="ACO31597.1"/>
    <property type="molecule type" value="Genomic_DNA"/>
</dbReference>
<dbReference type="RefSeq" id="WP_015898015.1">
    <property type="nucleotide sequence ID" value="NC_012483.1"/>
</dbReference>
<dbReference type="SMR" id="C1F4C3"/>
<dbReference type="FunCoup" id="C1F4C3">
    <property type="interactions" value="376"/>
</dbReference>
<dbReference type="STRING" id="240015.ACP_2964"/>
<dbReference type="KEGG" id="aca:ACP_2964"/>
<dbReference type="eggNOG" id="COG0218">
    <property type="taxonomic scope" value="Bacteria"/>
</dbReference>
<dbReference type="HOGENOM" id="CLU_033732_3_2_0"/>
<dbReference type="InParanoid" id="C1F4C3"/>
<dbReference type="OrthoDB" id="9804921at2"/>
<dbReference type="Proteomes" id="UP000002207">
    <property type="component" value="Chromosome"/>
</dbReference>
<dbReference type="GO" id="GO:0005829">
    <property type="term" value="C:cytosol"/>
    <property type="evidence" value="ECO:0007669"/>
    <property type="project" value="TreeGrafter"/>
</dbReference>
<dbReference type="GO" id="GO:0005525">
    <property type="term" value="F:GTP binding"/>
    <property type="evidence" value="ECO:0007669"/>
    <property type="project" value="UniProtKB-UniRule"/>
</dbReference>
<dbReference type="GO" id="GO:0046872">
    <property type="term" value="F:metal ion binding"/>
    <property type="evidence" value="ECO:0007669"/>
    <property type="project" value="UniProtKB-KW"/>
</dbReference>
<dbReference type="GO" id="GO:0000917">
    <property type="term" value="P:division septum assembly"/>
    <property type="evidence" value="ECO:0007669"/>
    <property type="project" value="UniProtKB-KW"/>
</dbReference>
<dbReference type="CDD" id="cd01876">
    <property type="entry name" value="YihA_EngB"/>
    <property type="match status" value="1"/>
</dbReference>
<dbReference type="Gene3D" id="3.40.50.300">
    <property type="entry name" value="P-loop containing nucleotide triphosphate hydrolases"/>
    <property type="match status" value="1"/>
</dbReference>
<dbReference type="HAMAP" id="MF_00321">
    <property type="entry name" value="GTPase_EngB"/>
    <property type="match status" value="1"/>
</dbReference>
<dbReference type="InterPro" id="IPR030393">
    <property type="entry name" value="G_ENGB_dom"/>
</dbReference>
<dbReference type="InterPro" id="IPR006073">
    <property type="entry name" value="GTP-bd"/>
</dbReference>
<dbReference type="InterPro" id="IPR019987">
    <property type="entry name" value="GTP-bd_ribosome_bio_YsxC"/>
</dbReference>
<dbReference type="InterPro" id="IPR027417">
    <property type="entry name" value="P-loop_NTPase"/>
</dbReference>
<dbReference type="NCBIfam" id="TIGR03598">
    <property type="entry name" value="GTPase_YsxC"/>
    <property type="match status" value="1"/>
</dbReference>
<dbReference type="PANTHER" id="PTHR11649:SF13">
    <property type="entry name" value="ENGB-TYPE G DOMAIN-CONTAINING PROTEIN"/>
    <property type="match status" value="1"/>
</dbReference>
<dbReference type="PANTHER" id="PTHR11649">
    <property type="entry name" value="MSS1/TRME-RELATED GTP-BINDING PROTEIN"/>
    <property type="match status" value="1"/>
</dbReference>
<dbReference type="Pfam" id="PF01926">
    <property type="entry name" value="MMR_HSR1"/>
    <property type="match status" value="1"/>
</dbReference>
<dbReference type="SUPFAM" id="SSF52540">
    <property type="entry name" value="P-loop containing nucleoside triphosphate hydrolases"/>
    <property type="match status" value="1"/>
</dbReference>
<dbReference type="PROSITE" id="PS51706">
    <property type="entry name" value="G_ENGB"/>
    <property type="match status" value="1"/>
</dbReference>
<evidence type="ECO:0000255" key="1">
    <source>
        <dbReference type="HAMAP-Rule" id="MF_00321"/>
    </source>
</evidence>
<organism>
    <name type="scientific">Acidobacterium capsulatum (strain ATCC 51196 / DSM 11244 / BCRC 80197 / JCM 7670 / NBRC 15755 / NCIMB 13165 / 161)</name>
    <dbReference type="NCBI Taxonomy" id="240015"/>
    <lineage>
        <taxon>Bacteria</taxon>
        <taxon>Pseudomonadati</taxon>
        <taxon>Acidobacteriota</taxon>
        <taxon>Terriglobia</taxon>
        <taxon>Terriglobales</taxon>
        <taxon>Acidobacteriaceae</taxon>
        <taxon>Acidobacterium</taxon>
    </lineage>
</organism>
<gene>
    <name evidence="1" type="primary">engB</name>
    <name type="ordered locus">ACP_2964</name>
</gene>